<comment type="similarity">
    <text evidence="1">Belongs to the eukaryotic ribosomal protein eS17 family.</text>
</comment>
<name>RS17E_SACI6</name>
<accession>C4KIQ2</accession>
<feature type="chain" id="PRO_1000206615" description="Small ribosomal subunit protein eS17">
    <location>
        <begin position="1"/>
        <end position="79"/>
    </location>
</feature>
<sequence length="79" mass="9615">MGNIYTKDIKRIVKEIYNQYKDEIKDDYNTNKQIVVRYVDVKSKKVRNRIAGYLTRYYKIMKEKETSPTEEKEEISEEI</sequence>
<dbReference type="EMBL" id="CP001402">
    <property type="protein sequence ID" value="ACR42466.1"/>
    <property type="molecule type" value="Genomic_DNA"/>
</dbReference>
<dbReference type="RefSeq" id="WP_012711820.1">
    <property type="nucleotide sequence ID" value="NC_012726.1"/>
</dbReference>
<dbReference type="SMR" id="C4KIQ2"/>
<dbReference type="KEGG" id="sid:M164_1863"/>
<dbReference type="HOGENOM" id="CLU_176720_0_0_2"/>
<dbReference type="Proteomes" id="UP000001479">
    <property type="component" value="Chromosome"/>
</dbReference>
<dbReference type="GO" id="GO:0005829">
    <property type="term" value="C:cytosol"/>
    <property type="evidence" value="ECO:0007669"/>
    <property type="project" value="UniProtKB-ARBA"/>
</dbReference>
<dbReference type="GO" id="GO:1990904">
    <property type="term" value="C:ribonucleoprotein complex"/>
    <property type="evidence" value="ECO:0007669"/>
    <property type="project" value="UniProtKB-KW"/>
</dbReference>
<dbReference type="GO" id="GO:0005840">
    <property type="term" value="C:ribosome"/>
    <property type="evidence" value="ECO:0007669"/>
    <property type="project" value="UniProtKB-KW"/>
</dbReference>
<dbReference type="GO" id="GO:0003735">
    <property type="term" value="F:structural constituent of ribosome"/>
    <property type="evidence" value="ECO:0007669"/>
    <property type="project" value="InterPro"/>
</dbReference>
<dbReference type="GO" id="GO:0006412">
    <property type="term" value="P:translation"/>
    <property type="evidence" value="ECO:0007669"/>
    <property type="project" value="UniProtKB-UniRule"/>
</dbReference>
<dbReference type="Gene3D" id="1.10.60.20">
    <property type="entry name" value="Ribosomal protein S17e-like"/>
    <property type="match status" value="1"/>
</dbReference>
<dbReference type="HAMAP" id="MF_00511">
    <property type="entry name" value="Ribosomal_eS17"/>
    <property type="match status" value="1"/>
</dbReference>
<dbReference type="InterPro" id="IPR001210">
    <property type="entry name" value="Ribosomal_eS17"/>
</dbReference>
<dbReference type="InterPro" id="IPR018273">
    <property type="entry name" value="Ribosomal_eS17_CS"/>
</dbReference>
<dbReference type="InterPro" id="IPR036401">
    <property type="entry name" value="Ribosomal_eS17_sf"/>
</dbReference>
<dbReference type="NCBIfam" id="NF002242">
    <property type="entry name" value="PRK01151.1"/>
    <property type="match status" value="1"/>
</dbReference>
<dbReference type="PANTHER" id="PTHR10732">
    <property type="entry name" value="40S RIBOSOMAL PROTEIN S17"/>
    <property type="match status" value="1"/>
</dbReference>
<dbReference type="PANTHER" id="PTHR10732:SF0">
    <property type="entry name" value="40S RIBOSOMAL PROTEIN S17"/>
    <property type="match status" value="1"/>
</dbReference>
<dbReference type="Pfam" id="PF00833">
    <property type="entry name" value="Ribosomal_S17e"/>
    <property type="match status" value="1"/>
</dbReference>
<dbReference type="SUPFAM" id="SSF116820">
    <property type="entry name" value="Rps17e-like"/>
    <property type="match status" value="1"/>
</dbReference>
<dbReference type="PROSITE" id="PS00712">
    <property type="entry name" value="RIBOSOMAL_S17E"/>
    <property type="match status" value="1"/>
</dbReference>
<protein>
    <recommendedName>
        <fullName evidence="1">Small ribosomal subunit protein eS17</fullName>
    </recommendedName>
    <alternativeName>
        <fullName evidence="2">30S ribosomal protein S17e</fullName>
    </alternativeName>
</protein>
<organism>
    <name type="scientific">Saccharolobus islandicus (strain M.16.4 / Kamchatka #3)</name>
    <name type="common">Sulfolobus islandicus</name>
    <dbReference type="NCBI Taxonomy" id="426118"/>
    <lineage>
        <taxon>Archaea</taxon>
        <taxon>Thermoproteota</taxon>
        <taxon>Thermoprotei</taxon>
        <taxon>Sulfolobales</taxon>
        <taxon>Sulfolobaceae</taxon>
        <taxon>Saccharolobus</taxon>
    </lineage>
</organism>
<reference key="1">
    <citation type="journal article" date="2009" name="Proc. Natl. Acad. Sci. U.S.A.">
        <title>Biogeography of the Sulfolobus islandicus pan-genome.</title>
        <authorList>
            <person name="Reno M.L."/>
            <person name="Held N.L."/>
            <person name="Fields C.J."/>
            <person name="Burke P.V."/>
            <person name="Whitaker R.J."/>
        </authorList>
    </citation>
    <scope>NUCLEOTIDE SEQUENCE [LARGE SCALE GENOMIC DNA]</scope>
    <source>
        <strain>M.16.4 / Kamchatka #3</strain>
    </source>
</reference>
<evidence type="ECO:0000255" key="1">
    <source>
        <dbReference type="HAMAP-Rule" id="MF_00511"/>
    </source>
</evidence>
<evidence type="ECO:0000305" key="2"/>
<gene>
    <name evidence="1" type="primary">rps17e</name>
    <name type="ordered locus">M164_1863</name>
</gene>
<keyword id="KW-0687">Ribonucleoprotein</keyword>
<keyword id="KW-0689">Ribosomal protein</keyword>
<proteinExistence type="inferred from homology"/>